<organism>
    <name type="scientific">Clostridium acetobutylicum (strain ATCC 824 / DSM 792 / JCM 1419 / IAM 19013 / LMG 5710 / NBRC 13948 / NRRL B-527 / VKM B-1787 / 2291 / W)</name>
    <dbReference type="NCBI Taxonomy" id="272562"/>
    <lineage>
        <taxon>Bacteria</taxon>
        <taxon>Bacillati</taxon>
        <taxon>Bacillota</taxon>
        <taxon>Clostridia</taxon>
        <taxon>Eubacteriales</taxon>
        <taxon>Clostridiaceae</taxon>
        <taxon>Clostridium</taxon>
    </lineage>
</organism>
<keyword id="KW-0030">Aminoacyl-tRNA synthetase</keyword>
<keyword id="KW-0067">ATP-binding</keyword>
<keyword id="KW-0963">Cytoplasm</keyword>
<keyword id="KW-0436">Ligase</keyword>
<keyword id="KW-0479">Metal-binding</keyword>
<keyword id="KW-0547">Nucleotide-binding</keyword>
<keyword id="KW-0648">Protein biosynthesis</keyword>
<keyword id="KW-1185">Reference proteome</keyword>
<keyword id="KW-0862">Zinc</keyword>
<dbReference type="EC" id="6.1.1.5" evidence="1"/>
<dbReference type="EMBL" id="AE001437">
    <property type="protein sequence ID" value="AAK80978.1"/>
    <property type="molecule type" value="Genomic_DNA"/>
</dbReference>
<dbReference type="PIR" id="G97273">
    <property type="entry name" value="G97273"/>
</dbReference>
<dbReference type="RefSeq" id="NP_349638.1">
    <property type="nucleotide sequence ID" value="NC_003030.1"/>
</dbReference>
<dbReference type="RefSeq" id="WP_010966319.1">
    <property type="nucleotide sequence ID" value="NC_003030.1"/>
</dbReference>
<dbReference type="SMR" id="Q97ES0"/>
<dbReference type="STRING" id="272562.CA_C3038"/>
<dbReference type="GeneID" id="44999525"/>
<dbReference type="KEGG" id="cac:CA_C3038"/>
<dbReference type="PATRIC" id="fig|272562.8.peg.3221"/>
<dbReference type="eggNOG" id="COG0060">
    <property type="taxonomic scope" value="Bacteria"/>
</dbReference>
<dbReference type="HOGENOM" id="CLU_001493_1_1_9"/>
<dbReference type="OrthoDB" id="9810365at2"/>
<dbReference type="Proteomes" id="UP000000814">
    <property type="component" value="Chromosome"/>
</dbReference>
<dbReference type="GO" id="GO:0005737">
    <property type="term" value="C:cytoplasm"/>
    <property type="evidence" value="ECO:0007669"/>
    <property type="project" value="UniProtKB-SubCell"/>
</dbReference>
<dbReference type="GO" id="GO:0002161">
    <property type="term" value="F:aminoacyl-tRNA deacylase activity"/>
    <property type="evidence" value="ECO:0007669"/>
    <property type="project" value="InterPro"/>
</dbReference>
<dbReference type="GO" id="GO:0005524">
    <property type="term" value="F:ATP binding"/>
    <property type="evidence" value="ECO:0007669"/>
    <property type="project" value="UniProtKB-UniRule"/>
</dbReference>
<dbReference type="GO" id="GO:0004822">
    <property type="term" value="F:isoleucine-tRNA ligase activity"/>
    <property type="evidence" value="ECO:0007669"/>
    <property type="project" value="UniProtKB-UniRule"/>
</dbReference>
<dbReference type="GO" id="GO:0000049">
    <property type="term" value="F:tRNA binding"/>
    <property type="evidence" value="ECO:0007669"/>
    <property type="project" value="InterPro"/>
</dbReference>
<dbReference type="GO" id="GO:0008270">
    <property type="term" value="F:zinc ion binding"/>
    <property type="evidence" value="ECO:0007669"/>
    <property type="project" value="UniProtKB-UniRule"/>
</dbReference>
<dbReference type="GO" id="GO:0006428">
    <property type="term" value="P:isoleucyl-tRNA aminoacylation"/>
    <property type="evidence" value="ECO:0007669"/>
    <property type="project" value="UniProtKB-UniRule"/>
</dbReference>
<dbReference type="CDD" id="cd07961">
    <property type="entry name" value="Anticodon_Ia_Ile_ABEc"/>
    <property type="match status" value="1"/>
</dbReference>
<dbReference type="CDD" id="cd00818">
    <property type="entry name" value="IleRS_core"/>
    <property type="match status" value="1"/>
</dbReference>
<dbReference type="FunFam" id="3.40.50.620:FF:000063">
    <property type="entry name" value="Isoleucine--tRNA ligase"/>
    <property type="match status" value="1"/>
</dbReference>
<dbReference type="FunFam" id="3.40.50.620:FF:000075">
    <property type="entry name" value="Isoleucine--tRNA ligase"/>
    <property type="match status" value="1"/>
</dbReference>
<dbReference type="Gene3D" id="3.40.50.620">
    <property type="entry name" value="HUPs"/>
    <property type="match status" value="2"/>
</dbReference>
<dbReference type="Gene3D" id="1.10.730.10">
    <property type="entry name" value="Isoleucyl-tRNA Synthetase, Domain 1"/>
    <property type="match status" value="1"/>
</dbReference>
<dbReference type="HAMAP" id="MF_02003">
    <property type="entry name" value="Ile_tRNA_synth_type2"/>
    <property type="match status" value="1"/>
</dbReference>
<dbReference type="InterPro" id="IPR001412">
    <property type="entry name" value="aa-tRNA-synth_I_CS"/>
</dbReference>
<dbReference type="InterPro" id="IPR002300">
    <property type="entry name" value="aa-tRNA-synth_Ia"/>
</dbReference>
<dbReference type="InterPro" id="IPR033709">
    <property type="entry name" value="Anticodon_Ile_ABEc"/>
</dbReference>
<dbReference type="InterPro" id="IPR002301">
    <property type="entry name" value="Ile-tRNA-ligase"/>
</dbReference>
<dbReference type="InterPro" id="IPR023586">
    <property type="entry name" value="Ile-tRNA-ligase_type2"/>
</dbReference>
<dbReference type="InterPro" id="IPR013155">
    <property type="entry name" value="M/V/L/I-tRNA-synth_anticd-bd"/>
</dbReference>
<dbReference type="InterPro" id="IPR014729">
    <property type="entry name" value="Rossmann-like_a/b/a_fold"/>
</dbReference>
<dbReference type="InterPro" id="IPR009080">
    <property type="entry name" value="tRNAsynth_Ia_anticodon-bd"/>
</dbReference>
<dbReference type="InterPro" id="IPR009008">
    <property type="entry name" value="Val/Leu/Ile-tRNA-synth_edit"/>
</dbReference>
<dbReference type="NCBIfam" id="TIGR00392">
    <property type="entry name" value="ileS"/>
    <property type="match status" value="1"/>
</dbReference>
<dbReference type="PANTHER" id="PTHR42780:SF1">
    <property type="entry name" value="ISOLEUCINE--TRNA LIGASE, CYTOPLASMIC"/>
    <property type="match status" value="1"/>
</dbReference>
<dbReference type="PANTHER" id="PTHR42780">
    <property type="entry name" value="SOLEUCYL-TRNA SYNTHETASE"/>
    <property type="match status" value="1"/>
</dbReference>
<dbReference type="Pfam" id="PF08264">
    <property type="entry name" value="Anticodon_1"/>
    <property type="match status" value="1"/>
</dbReference>
<dbReference type="Pfam" id="PF19302">
    <property type="entry name" value="DUF5915"/>
    <property type="match status" value="1"/>
</dbReference>
<dbReference type="Pfam" id="PF00133">
    <property type="entry name" value="tRNA-synt_1"/>
    <property type="match status" value="1"/>
</dbReference>
<dbReference type="PRINTS" id="PR00984">
    <property type="entry name" value="TRNASYNTHILE"/>
</dbReference>
<dbReference type="SUPFAM" id="SSF47323">
    <property type="entry name" value="Anticodon-binding domain of a subclass of class I aminoacyl-tRNA synthetases"/>
    <property type="match status" value="2"/>
</dbReference>
<dbReference type="SUPFAM" id="SSF52374">
    <property type="entry name" value="Nucleotidylyl transferase"/>
    <property type="match status" value="1"/>
</dbReference>
<dbReference type="SUPFAM" id="SSF50677">
    <property type="entry name" value="ValRS/IleRS/LeuRS editing domain"/>
    <property type="match status" value="1"/>
</dbReference>
<dbReference type="PROSITE" id="PS00178">
    <property type="entry name" value="AA_TRNA_LIGASE_I"/>
    <property type="match status" value="1"/>
</dbReference>
<sequence length="1035" mass="119411">MYKKVDSSKSFVDIERDVLKLWHEKEIVKKSFNSNQDGEYFSFYDGPPTANGRPHVGHIITRVMKDLIPRYKVMKGYKVPRKAGWDTHGLPVELEIEKKLGISGKPQIEEYGIEKFVKECKESVFSYVSLWKDMSEKLGYWVDMENPYVTYHNDYIESVWWALKQMWDKDLLYKGHKIVPYCPRCGTALSSHEVAQGYKDVKEATAFVKFKVKGEENKYILAWTTTPWTLPSNVALAINKAYDYVEVINNGEHLILAKALLTVLEGEYEVVSEFKGEKLLGMEYEQLFKFANPDKKAFYVVHGDFVTLSDGTGIVHIAPAYGEDDNMLGKKYDLPLINLVNGEGKFVDEVEPWKGLFVKKADPKILEYMKENGTLYKSEKFTHSYPHCWRCDTPLLYYPRDSWFVRMTSLRDKLVENNNKIHWYPDNIRTGRFGKFVENVIDWGISRDRYWGTPLPIWQCECGHRDCVGSIEELKEKGINVPENIELHKPYIDEVKLTCPKCGKPMTRTEEVIDCWFDSGSMPFAQLHYPFENKEVFENTFPAQFISEAVDQTRGWFYTLLAISTSIFDKSSFENCIVLGHVLDKHGLKMSKHKGNVVDPFDVLDNQGADACRWHFYTSSAPWLPTRFSQEDVAETQRKFLSTLWNVYSFYVLYAEIDKFNPNDYKDFVSGNVMDKWIVSRLNTLTKDVGNYLDSYGITQAALEIQDFVDDLSNWYVRRNRSRYWTQELTDDKVGAYVTLYRVLVTLSKVAAPFIPFMTEQIYQSLVTSINEGAEESVHLCKWPEYDESLIDSSLEEEMKLAISIVKLGRSARNGANIKNRQPLYEMRVSTKALPDYYGDIIRDELNVKKVEFGADLSKYVNFEIKPNLPVLGKSYGKLIPKIRKEISSMDQMKLAERVRSGEAVKIDVDGTEIELNSENLLVTMQGLEGFAFAGIGEIGIVLETTITDELREEGYLREVLSKVQNMRKESGFEVADKIEIYVSGNEKLENVIRKFEDTIKKETLATDIIYSENKEAAIYNINGEELNVFVKKNC</sequence>
<name>SYI_CLOAB</name>
<gene>
    <name evidence="1" type="primary">ileS</name>
    <name type="ordered locus">CA_C3038</name>
</gene>
<proteinExistence type="inferred from homology"/>
<feature type="chain" id="PRO_0000098533" description="Isoleucine--tRNA ligase">
    <location>
        <begin position="1"/>
        <end position="1035"/>
    </location>
</feature>
<feature type="short sequence motif" description="'HIGH' region">
    <location>
        <begin position="48"/>
        <end position="58"/>
    </location>
</feature>
<feature type="short sequence motif" description="'KMSKS' region">
    <location>
        <begin position="589"/>
        <end position="593"/>
    </location>
</feature>
<feature type="binding site" evidence="1">
    <location>
        <position position="592"/>
    </location>
    <ligand>
        <name>ATP</name>
        <dbReference type="ChEBI" id="CHEBI:30616"/>
    </ligand>
</feature>
<comment type="function">
    <text evidence="1">Catalyzes the attachment of isoleucine to tRNA(Ile). As IleRS can inadvertently accommodate and process structurally similar amino acids such as valine, to avoid such errors it has two additional distinct tRNA(Ile)-dependent editing activities. One activity is designated as 'pretransfer' editing and involves the hydrolysis of activated Val-AMP. The other activity is designated 'posttransfer' editing and involves deacylation of mischarged Val-tRNA(Ile).</text>
</comment>
<comment type="catalytic activity">
    <reaction evidence="1">
        <text>tRNA(Ile) + L-isoleucine + ATP = L-isoleucyl-tRNA(Ile) + AMP + diphosphate</text>
        <dbReference type="Rhea" id="RHEA:11060"/>
        <dbReference type="Rhea" id="RHEA-COMP:9666"/>
        <dbReference type="Rhea" id="RHEA-COMP:9695"/>
        <dbReference type="ChEBI" id="CHEBI:30616"/>
        <dbReference type="ChEBI" id="CHEBI:33019"/>
        <dbReference type="ChEBI" id="CHEBI:58045"/>
        <dbReference type="ChEBI" id="CHEBI:78442"/>
        <dbReference type="ChEBI" id="CHEBI:78528"/>
        <dbReference type="ChEBI" id="CHEBI:456215"/>
        <dbReference type="EC" id="6.1.1.5"/>
    </reaction>
</comment>
<comment type="cofactor">
    <cofactor evidence="1">
        <name>Zn(2+)</name>
        <dbReference type="ChEBI" id="CHEBI:29105"/>
    </cofactor>
</comment>
<comment type="subunit">
    <text evidence="1">Monomer.</text>
</comment>
<comment type="subcellular location">
    <subcellularLocation>
        <location evidence="1">Cytoplasm</location>
    </subcellularLocation>
</comment>
<comment type="domain">
    <text evidence="1">IleRS has two distinct active sites: one for aminoacylation and one for editing. The misactivated valine is translocated from the active site to the editing site, which sterically excludes the correctly activated isoleucine. The single editing site contains two valyl binding pockets, one specific for each substrate (Val-AMP or Val-tRNA(Ile)).</text>
</comment>
<comment type="similarity">
    <text evidence="1">Belongs to the class-I aminoacyl-tRNA synthetase family. IleS type 2 subfamily.</text>
</comment>
<accession>Q97ES0</accession>
<protein>
    <recommendedName>
        <fullName evidence="1">Isoleucine--tRNA ligase</fullName>
        <ecNumber evidence="1">6.1.1.5</ecNumber>
    </recommendedName>
    <alternativeName>
        <fullName evidence="1">Isoleucyl-tRNA synthetase</fullName>
        <shortName evidence="1">IleRS</shortName>
    </alternativeName>
</protein>
<evidence type="ECO:0000255" key="1">
    <source>
        <dbReference type="HAMAP-Rule" id="MF_02003"/>
    </source>
</evidence>
<reference key="1">
    <citation type="journal article" date="2001" name="J. Bacteriol.">
        <title>Genome sequence and comparative analysis of the solvent-producing bacterium Clostridium acetobutylicum.</title>
        <authorList>
            <person name="Noelling J."/>
            <person name="Breton G."/>
            <person name="Omelchenko M.V."/>
            <person name="Makarova K.S."/>
            <person name="Zeng Q."/>
            <person name="Gibson R."/>
            <person name="Lee H.M."/>
            <person name="Dubois J."/>
            <person name="Qiu D."/>
            <person name="Hitti J."/>
            <person name="Wolf Y.I."/>
            <person name="Tatusov R.L."/>
            <person name="Sabathe F."/>
            <person name="Doucette-Stamm L.A."/>
            <person name="Soucaille P."/>
            <person name="Daly M.J."/>
            <person name="Bennett G.N."/>
            <person name="Koonin E.V."/>
            <person name="Smith D.R."/>
        </authorList>
    </citation>
    <scope>NUCLEOTIDE SEQUENCE [LARGE SCALE GENOMIC DNA]</scope>
    <source>
        <strain>ATCC 824 / DSM 792 / JCM 1419 / IAM 19013 / LMG 5710 / NBRC 13948 / NRRL B-527 / VKM B-1787 / 2291 / W</strain>
    </source>
</reference>